<name>PEPF1_LACLC</name>
<gene>
    <name type="primary">pepF1</name>
    <name type="synonym">pepF</name>
</gene>
<sequence>MAKNRNEIPEKLTWDLTTIYKTDKEWEAELTRIKSELSLVEETDPGHLLDSAESLLTITEKMLSISQQVEKLYVYASMKNDQDTREAKYQEYQSKATALYVKFGEVYAFYEPEFLKISKEVYNKWLGELQKLKNYDHMFERLFAKKAHILSQKEEKLLAAAGEIFESPSETFEIFDNADIKLPMVKNESDEMIQLTHGNYSSLMESKNRGVRKAAYKALYSNYEQYQHTYAKTLQTNVKVHNLNAQIRSYDSARQAALANNFVPEKVYDVLMEAIHQHLPLLHRYIELRKKILGITDLKMYGIYTPLSNLGYKFNYEDGVKKAEEVLAIFGKEYKGKVKAAFEQRWIDVEENIGKRSGAYSGGSYDTNAFMLLNWQETLDDLFTLVHETGHSMHSAFTRENQPYVYGNYPIFLAEIASTTNENILTETLLKESKDDKERFALLNHWLDSFRGTVFRQSQFAEFEQKIHEADAAGEVLTSEYLNSLYGEINEKYYNLAVKGNPEIQYEWARIPHFYYNFYVFQYATGFAAATFLAEKVVHGSTEDRQKYLEYLKAGSSAYPLEVIAKAGVDMESTDYLDAAFELFENRLSELEKLVEKGVHL</sequence>
<keyword id="KW-0903">Direct protein sequencing</keyword>
<keyword id="KW-0378">Hydrolase</keyword>
<keyword id="KW-0479">Metal-binding</keyword>
<keyword id="KW-0482">Metalloprotease</keyword>
<keyword id="KW-0614">Plasmid</keyword>
<keyword id="KW-0645">Protease</keyword>
<keyword id="KW-0862">Zinc</keyword>
<reference key="1">
    <citation type="journal article" date="1994" name="J. Biol. Chem.">
        <title>Biochemical and genetic characterization of PepF, an oligopeptidase from Lactococcus lactis.</title>
        <authorList>
            <person name="Monnet V."/>
            <person name="Nardi M."/>
            <person name="Chopin A."/>
            <person name="Chopin M.-C."/>
            <person name="Gripon J.-C."/>
        </authorList>
    </citation>
    <scope>NUCLEOTIDE SEQUENCE [GENOMIC DNA]</scope>
    <scope>PARTIAL PROTEIN SEQUENCE</scope>
    <source>
        <strain>NCDO 763 / ML3</strain>
    </source>
</reference>
<reference key="2">
    <citation type="journal article" date="1997" name="J. Bacteriol.">
        <title>Duplication of the pepF gene and shuffling of DNA fragments on the lactose plasmid of Lactococcus lactis.</title>
        <authorList>
            <person name="Nardi M."/>
            <person name="Renault P."/>
            <person name="Monnet V."/>
        </authorList>
    </citation>
    <scope>NUCLEOTIDE SEQUENCE [GENOMIC DNA]</scope>
    <source>
        <strain>NCDO 763 / ML3</strain>
    </source>
</reference>
<comment type="function">
    <text>Hydrolyzes peptides containing between 7 and 17 amino acids with a rather wide specificity.</text>
</comment>
<comment type="cofactor">
    <cofactor evidence="1">
        <name>Zn(2+)</name>
        <dbReference type="ChEBI" id="CHEBI:29105"/>
    </cofactor>
    <text evidence="1">Binds 1 zinc ion.</text>
</comment>
<comment type="similarity">
    <text evidence="2">Belongs to the peptidase M3B family.</text>
</comment>
<evidence type="ECO:0000250" key="1"/>
<evidence type="ECO:0000305" key="2"/>
<feature type="chain" id="PRO_0000078163" description="Oligoendopeptidase F, plasmid">
    <location>
        <begin position="1"/>
        <end position="601"/>
    </location>
</feature>
<feature type="active site" evidence="1">
    <location>
        <position position="388"/>
    </location>
</feature>
<feature type="binding site" evidence="1">
    <location>
        <position position="387"/>
    </location>
    <ligand>
        <name>Zn(2+)</name>
        <dbReference type="ChEBI" id="CHEBI:29105"/>
        <note>catalytic</note>
    </ligand>
</feature>
<feature type="binding site" evidence="1">
    <location>
        <position position="391"/>
    </location>
    <ligand>
        <name>Zn(2+)</name>
        <dbReference type="ChEBI" id="CHEBI:29105"/>
        <note>catalytic</note>
    </ligand>
</feature>
<feature type="binding site" evidence="1">
    <location>
        <position position="394"/>
    </location>
    <ligand>
        <name>Zn(2+)</name>
        <dbReference type="ChEBI" id="CHEBI:29105"/>
        <note>catalytic</note>
    </ligand>
</feature>
<feature type="sequence conflict" description="In Ref. 2; CAA68133." evidence="2" ref="2">
    <original>F</original>
    <variation>S</variation>
    <location>
        <position position="518"/>
    </location>
</feature>
<accession>P54124</accession>
<accession>P94880</accession>
<geneLocation type="plasmid">
    <name>pLP763</name>
</geneLocation>
<organism>
    <name type="scientific">Lactococcus lactis subsp. cremoris</name>
    <name type="common">Streptococcus cremoris</name>
    <dbReference type="NCBI Taxonomy" id="1359"/>
    <lineage>
        <taxon>Bacteria</taxon>
        <taxon>Bacillati</taxon>
        <taxon>Bacillota</taxon>
        <taxon>Bacilli</taxon>
        <taxon>Lactobacillales</taxon>
        <taxon>Streptococcaceae</taxon>
        <taxon>Lactococcus</taxon>
    </lineage>
</organism>
<dbReference type="EC" id="3.4.24.-"/>
<dbReference type="EMBL" id="Z32522">
    <property type="protein sequence ID" value="CAA83534.1"/>
    <property type="molecule type" value="Genomic_DNA"/>
</dbReference>
<dbReference type="EMBL" id="X99798">
    <property type="protein sequence ID" value="CAA68133.1"/>
    <property type="molecule type" value="Genomic_DNA"/>
</dbReference>
<dbReference type="PIR" id="A55485">
    <property type="entry name" value="A55485"/>
</dbReference>
<dbReference type="SMR" id="P54124"/>
<dbReference type="MEROPS" id="M03.007"/>
<dbReference type="BRENDA" id="3.4.24.B2">
    <property type="organism ID" value="2903"/>
</dbReference>
<dbReference type="GO" id="GO:0046872">
    <property type="term" value="F:metal ion binding"/>
    <property type="evidence" value="ECO:0007669"/>
    <property type="project" value="UniProtKB-KW"/>
</dbReference>
<dbReference type="GO" id="GO:0004222">
    <property type="term" value="F:metalloendopeptidase activity"/>
    <property type="evidence" value="ECO:0007669"/>
    <property type="project" value="InterPro"/>
</dbReference>
<dbReference type="GO" id="GO:0006518">
    <property type="term" value="P:peptide metabolic process"/>
    <property type="evidence" value="ECO:0007669"/>
    <property type="project" value="TreeGrafter"/>
</dbReference>
<dbReference type="GO" id="GO:0006508">
    <property type="term" value="P:proteolysis"/>
    <property type="evidence" value="ECO:0007669"/>
    <property type="project" value="UniProtKB-KW"/>
</dbReference>
<dbReference type="CDD" id="cd09608">
    <property type="entry name" value="M3B_PepF"/>
    <property type="match status" value="1"/>
</dbReference>
<dbReference type="Gene3D" id="1.10.1370.20">
    <property type="entry name" value="Oligoendopeptidase f, C-terminal domain"/>
    <property type="match status" value="1"/>
</dbReference>
<dbReference type="Gene3D" id="1.20.140.70">
    <property type="entry name" value="Oligopeptidase f, N-terminal domain"/>
    <property type="match status" value="1"/>
</dbReference>
<dbReference type="Gene3D" id="1.10.287.830">
    <property type="entry name" value="putative peptidase helix hairpin domain like"/>
    <property type="match status" value="1"/>
</dbReference>
<dbReference type="InterPro" id="IPR013647">
    <property type="entry name" value="OligopepF_N_dom"/>
</dbReference>
<dbReference type="InterPro" id="IPR042088">
    <property type="entry name" value="OligoPept_F_C"/>
</dbReference>
<dbReference type="InterPro" id="IPR045090">
    <property type="entry name" value="Pept_M3A_M3B"/>
</dbReference>
<dbReference type="InterPro" id="IPR001567">
    <property type="entry name" value="Pept_M3A_M3B_dom"/>
</dbReference>
<dbReference type="InterPro" id="IPR004438">
    <property type="entry name" value="Peptidase_M3B"/>
</dbReference>
<dbReference type="NCBIfam" id="TIGR00181">
    <property type="entry name" value="pepF"/>
    <property type="match status" value="1"/>
</dbReference>
<dbReference type="PANTHER" id="PTHR11804">
    <property type="entry name" value="PROTEASE M3 THIMET OLIGOPEPTIDASE-RELATED"/>
    <property type="match status" value="1"/>
</dbReference>
<dbReference type="PANTHER" id="PTHR11804:SF84">
    <property type="entry name" value="SACCHAROLYSIN"/>
    <property type="match status" value="1"/>
</dbReference>
<dbReference type="Pfam" id="PF01432">
    <property type="entry name" value="Peptidase_M3"/>
    <property type="match status" value="1"/>
</dbReference>
<dbReference type="Pfam" id="PF08439">
    <property type="entry name" value="Peptidase_M3_N"/>
    <property type="match status" value="1"/>
</dbReference>
<dbReference type="SUPFAM" id="SSF55486">
    <property type="entry name" value="Metalloproteases ('zincins'), catalytic domain"/>
    <property type="match status" value="1"/>
</dbReference>
<protein>
    <recommendedName>
        <fullName>Oligoendopeptidase F, plasmid</fullName>
        <ecNumber>3.4.24.-</ecNumber>
    </recommendedName>
</protein>
<proteinExistence type="evidence at protein level"/>